<dbReference type="EC" id="2.1.3.15" evidence="1"/>
<dbReference type="EMBL" id="FM209186">
    <property type="protein sequence ID" value="CAW26124.1"/>
    <property type="molecule type" value="Genomic_DNA"/>
</dbReference>
<dbReference type="RefSeq" id="WP_003098575.1">
    <property type="nucleotide sequence ID" value="NC_011770.1"/>
</dbReference>
<dbReference type="SMR" id="B7V7U9"/>
<dbReference type="KEGG" id="pag:PLES_13961"/>
<dbReference type="HOGENOM" id="CLU_015486_0_2_6"/>
<dbReference type="UniPathway" id="UPA00655">
    <property type="reaction ID" value="UER00711"/>
</dbReference>
<dbReference type="GO" id="GO:0009317">
    <property type="term" value="C:acetyl-CoA carboxylase complex"/>
    <property type="evidence" value="ECO:0007669"/>
    <property type="project" value="InterPro"/>
</dbReference>
<dbReference type="GO" id="GO:0003989">
    <property type="term" value="F:acetyl-CoA carboxylase activity"/>
    <property type="evidence" value="ECO:0007669"/>
    <property type="project" value="InterPro"/>
</dbReference>
<dbReference type="GO" id="GO:0005524">
    <property type="term" value="F:ATP binding"/>
    <property type="evidence" value="ECO:0007669"/>
    <property type="project" value="UniProtKB-KW"/>
</dbReference>
<dbReference type="GO" id="GO:0016743">
    <property type="term" value="F:carboxyl- or carbamoyltransferase activity"/>
    <property type="evidence" value="ECO:0007669"/>
    <property type="project" value="UniProtKB-UniRule"/>
</dbReference>
<dbReference type="GO" id="GO:0006633">
    <property type="term" value="P:fatty acid biosynthetic process"/>
    <property type="evidence" value="ECO:0007669"/>
    <property type="project" value="UniProtKB-KW"/>
</dbReference>
<dbReference type="GO" id="GO:2001295">
    <property type="term" value="P:malonyl-CoA biosynthetic process"/>
    <property type="evidence" value="ECO:0007669"/>
    <property type="project" value="UniProtKB-UniRule"/>
</dbReference>
<dbReference type="FunFam" id="3.90.226.10:FF:000008">
    <property type="entry name" value="Acetyl-coenzyme A carboxylase carboxyl transferase subunit alpha"/>
    <property type="match status" value="1"/>
</dbReference>
<dbReference type="Gene3D" id="3.90.226.10">
    <property type="entry name" value="2-enoyl-CoA Hydratase, Chain A, domain 1"/>
    <property type="match status" value="1"/>
</dbReference>
<dbReference type="HAMAP" id="MF_00823">
    <property type="entry name" value="AcetylCoA_CT_alpha"/>
    <property type="match status" value="1"/>
</dbReference>
<dbReference type="InterPro" id="IPR001095">
    <property type="entry name" value="Acetyl_CoA_COase_a_su"/>
</dbReference>
<dbReference type="InterPro" id="IPR029045">
    <property type="entry name" value="ClpP/crotonase-like_dom_sf"/>
</dbReference>
<dbReference type="InterPro" id="IPR011763">
    <property type="entry name" value="COA_CT_C"/>
</dbReference>
<dbReference type="NCBIfam" id="TIGR00513">
    <property type="entry name" value="accA"/>
    <property type="match status" value="1"/>
</dbReference>
<dbReference type="NCBIfam" id="NF041504">
    <property type="entry name" value="AccA_sub"/>
    <property type="match status" value="1"/>
</dbReference>
<dbReference type="NCBIfam" id="NF004344">
    <property type="entry name" value="PRK05724.1"/>
    <property type="match status" value="1"/>
</dbReference>
<dbReference type="PANTHER" id="PTHR42853">
    <property type="entry name" value="ACETYL-COENZYME A CARBOXYLASE CARBOXYL TRANSFERASE SUBUNIT ALPHA"/>
    <property type="match status" value="1"/>
</dbReference>
<dbReference type="PANTHER" id="PTHR42853:SF3">
    <property type="entry name" value="ACETYL-COENZYME A CARBOXYLASE CARBOXYL TRANSFERASE SUBUNIT ALPHA, CHLOROPLASTIC"/>
    <property type="match status" value="1"/>
</dbReference>
<dbReference type="Pfam" id="PF03255">
    <property type="entry name" value="ACCA"/>
    <property type="match status" value="1"/>
</dbReference>
<dbReference type="PRINTS" id="PR01069">
    <property type="entry name" value="ACCCTRFRASEA"/>
</dbReference>
<dbReference type="SUPFAM" id="SSF52096">
    <property type="entry name" value="ClpP/crotonase"/>
    <property type="match status" value="1"/>
</dbReference>
<dbReference type="PROSITE" id="PS50989">
    <property type="entry name" value="COA_CT_CTER"/>
    <property type="match status" value="1"/>
</dbReference>
<reference key="1">
    <citation type="journal article" date="2009" name="Genome Res.">
        <title>Newly introduced genomic prophage islands are critical determinants of in vivo competitiveness in the Liverpool epidemic strain of Pseudomonas aeruginosa.</title>
        <authorList>
            <person name="Winstanley C."/>
            <person name="Langille M.G.I."/>
            <person name="Fothergill J.L."/>
            <person name="Kukavica-Ibrulj I."/>
            <person name="Paradis-Bleau C."/>
            <person name="Sanschagrin F."/>
            <person name="Thomson N.R."/>
            <person name="Winsor G.L."/>
            <person name="Quail M.A."/>
            <person name="Lennard N."/>
            <person name="Bignell A."/>
            <person name="Clarke L."/>
            <person name="Seeger K."/>
            <person name="Saunders D."/>
            <person name="Harris D."/>
            <person name="Parkhill J."/>
            <person name="Hancock R.E.W."/>
            <person name="Brinkman F.S.L."/>
            <person name="Levesque R.C."/>
        </authorList>
    </citation>
    <scope>NUCLEOTIDE SEQUENCE [LARGE SCALE GENOMIC DNA]</scope>
    <source>
        <strain>LESB58</strain>
    </source>
</reference>
<keyword id="KW-0067">ATP-binding</keyword>
<keyword id="KW-0963">Cytoplasm</keyword>
<keyword id="KW-0275">Fatty acid biosynthesis</keyword>
<keyword id="KW-0276">Fatty acid metabolism</keyword>
<keyword id="KW-0444">Lipid biosynthesis</keyword>
<keyword id="KW-0443">Lipid metabolism</keyword>
<keyword id="KW-0547">Nucleotide-binding</keyword>
<keyword id="KW-0808">Transferase</keyword>
<comment type="function">
    <text evidence="1">Component of the acetyl coenzyme A carboxylase (ACC) complex. First, biotin carboxylase catalyzes the carboxylation of biotin on its carrier protein (BCCP) and then the CO(2) group is transferred by the carboxyltransferase to acetyl-CoA to form malonyl-CoA.</text>
</comment>
<comment type="catalytic activity">
    <reaction evidence="1">
        <text>N(6)-carboxybiotinyl-L-lysyl-[protein] + acetyl-CoA = N(6)-biotinyl-L-lysyl-[protein] + malonyl-CoA</text>
        <dbReference type="Rhea" id="RHEA:54728"/>
        <dbReference type="Rhea" id="RHEA-COMP:10505"/>
        <dbReference type="Rhea" id="RHEA-COMP:10506"/>
        <dbReference type="ChEBI" id="CHEBI:57288"/>
        <dbReference type="ChEBI" id="CHEBI:57384"/>
        <dbReference type="ChEBI" id="CHEBI:83144"/>
        <dbReference type="ChEBI" id="CHEBI:83145"/>
        <dbReference type="EC" id="2.1.3.15"/>
    </reaction>
</comment>
<comment type="pathway">
    <text evidence="1">Lipid metabolism; malonyl-CoA biosynthesis; malonyl-CoA from acetyl-CoA: step 1/1.</text>
</comment>
<comment type="subunit">
    <text evidence="1">Acetyl-CoA carboxylase is a heterohexamer composed of biotin carboxyl carrier protein (AccB), biotin carboxylase (AccC) and two subunits each of ACCase subunit alpha (AccA) and ACCase subunit beta (AccD).</text>
</comment>
<comment type="subcellular location">
    <subcellularLocation>
        <location evidence="1">Cytoplasm</location>
    </subcellularLocation>
</comment>
<comment type="similarity">
    <text evidence="1">Belongs to the AccA family.</text>
</comment>
<organism>
    <name type="scientific">Pseudomonas aeruginosa (strain LESB58)</name>
    <dbReference type="NCBI Taxonomy" id="557722"/>
    <lineage>
        <taxon>Bacteria</taxon>
        <taxon>Pseudomonadati</taxon>
        <taxon>Pseudomonadota</taxon>
        <taxon>Gammaproteobacteria</taxon>
        <taxon>Pseudomonadales</taxon>
        <taxon>Pseudomonadaceae</taxon>
        <taxon>Pseudomonas</taxon>
    </lineage>
</organism>
<protein>
    <recommendedName>
        <fullName evidence="1">Acetyl-coenzyme A carboxylase carboxyl transferase subunit alpha</fullName>
        <shortName evidence="1">ACCase subunit alpha</shortName>
        <shortName evidence="1">Acetyl-CoA carboxylase carboxyltransferase subunit alpha</shortName>
        <ecNumber evidence="1">2.1.3.15</ecNumber>
    </recommendedName>
</protein>
<sequence>MNPNFLDFEQPIADLQAKIEELRLVGNDNALNISDEISRLQDKSKALTENIFGNLSSWQIAQLARHPKRPYTLDYIGYLFSDFEELHGDRHFADDPAIVGGVARLDGSPVMVIGHQKGREVREKVRRNFGMPRPEGYRKACRLMEMAERFKMPILTFIDTPGAYPGIDAEERGQSEAIAWNLRVMARLKTPIIATVIGEGGSGGALAIGVCDQLNMLQYSTYSVISPEGCASILWKTAEKAPEAAEAMGITAERLKGLGIVDKVIDEPLGGAHRDPASMAESIRGELLTQLKMLQGLEMGELLERRYDRLMSYGAP</sequence>
<proteinExistence type="inferred from homology"/>
<evidence type="ECO:0000255" key="1">
    <source>
        <dbReference type="HAMAP-Rule" id="MF_00823"/>
    </source>
</evidence>
<evidence type="ECO:0000255" key="2">
    <source>
        <dbReference type="PROSITE-ProRule" id="PRU01137"/>
    </source>
</evidence>
<accession>B7V7U9</accession>
<gene>
    <name evidence="1" type="primary">accA</name>
    <name type="ordered locus">PLES_13961</name>
</gene>
<feature type="chain" id="PRO_1000134508" description="Acetyl-coenzyme A carboxylase carboxyl transferase subunit alpha">
    <location>
        <begin position="1"/>
        <end position="316"/>
    </location>
</feature>
<feature type="domain" description="CoA carboxyltransferase C-terminal" evidence="2">
    <location>
        <begin position="39"/>
        <end position="293"/>
    </location>
</feature>
<name>ACCA_PSEA8</name>